<dbReference type="EC" id="2.1.1.182" evidence="1"/>
<dbReference type="EMBL" id="CP000503">
    <property type="protein sequence ID" value="ABM25993.1"/>
    <property type="molecule type" value="Genomic_DNA"/>
</dbReference>
<dbReference type="RefSeq" id="WP_011790443.1">
    <property type="nucleotide sequence ID" value="NC_008750.1"/>
</dbReference>
<dbReference type="SMR" id="A1RMU8"/>
<dbReference type="GeneID" id="67442499"/>
<dbReference type="KEGG" id="shw:Sputw3181_3178"/>
<dbReference type="HOGENOM" id="CLU_041220_0_1_6"/>
<dbReference type="Proteomes" id="UP000002597">
    <property type="component" value="Chromosome"/>
</dbReference>
<dbReference type="GO" id="GO:0005829">
    <property type="term" value="C:cytosol"/>
    <property type="evidence" value="ECO:0007669"/>
    <property type="project" value="TreeGrafter"/>
</dbReference>
<dbReference type="GO" id="GO:0052908">
    <property type="term" value="F:16S rRNA (adenine(1518)-N(6)/adenine(1519)-N(6))-dimethyltransferase activity"/>
    <property type="evidence" value="ECO:0007669"/>
    <property type="project" value="UniProtKB-EC"/>
</dbReference>
<dbReference type="GO" id="GO:0003723">
    <property type="term" value="F:RNA binding"/>
    <property type="evidence" value="ECO:0007669"/>
    <property type="project" value="UniProtKB-KW"/>
</dbReference>
<dbReference type="FunFam" id="1.10.8.100:FF:000001">
    <property type="entry name" value="Ribosomal RNA small subunit methyltransferase A"/>
    <property type="match status" value="1"/>
</dbReference>
<dbReference type="FunFam" id="3.40.50.150:FF:000006">
    <property type="entry name" value="Ribosomal RNA small subunit methyltransferase A"/>
    <property type="match status" value="1"/>
</dbReference>
<dbReference type="Gene3D" id="1.10.8.100">
    <property type="entry name" value="Ribosomal RNA adenine dimethylase-like, domain 2"/>
    <property type="match status" value="1"/>
</dbReference>
<dbReference type="Gene3D" id="3.40.50.150">
    <property type="entry name" value="Vaccinia Virus protein VP39"/>
    <property type="match status" value="1"/>
</dbReference>
<dbReference type="HAMAP" id="MF_00607">
    <property type="entry name" value="16SrRNA_methyltr_A"/>
    <property type="match status" value="1"/>
</dbReference>
<dbReference type="InterPro" id="IPR001737">
    <property type="entry name" value="KsgA/Erm"/>
</dbReference>
<dbReference type="InterPro" id="IPR023165">
    <property type="entry name" value="rRNA_Ade_diMease-like_C"/>
</dbReference>
<dbReference type="InterPro" id="IPR020596">
    <property type="entry name" value="rRNA_Ade_Mease_Trfase_CS"/>
</dbReference>
<dbReference type="InterPro" id="IPR020598">
    <property type="entry name" value="rRNA_Ade_methylase_Trfase_N"/>
</dbReference>
<dbReference type="InterPro" id="IPR011530">
    <property type="entry name" value="rRNA_adenine_dimethylase"/>
</dbReference>
<dbReference type="InterPro" id="IPR029063">
    <property type="entry name" value="SAM-dependent_MTases_sf"/>
</dbReference>
<dbReference type="NCBIfam" id="TIGR00755">
    <property type="entry name" value="ksgA"/>
    <property type="match status" value="1"/>
</dbReference>
<dbReference type="PANTHER" id="PTHR11727">
    <property type="entry name" value="DIMETHYLADENOSINE TRANSFERASE"/>
    <property type="match status" value="1"/>
</dbReference>
<dbReference type="PANTHER" id="PTHR11727:SF7">
    <property type="entry name" value="DIMETHYLADENOSINE TRANSFERASE-RELATED"/>
    <property type="match status" value="1"/>
</dbReference>
<dbReference type="Pfam" id="PF00398">
    <property type="entry name" value="RrnaAD"/>
    <property type="match status" value="1"/>
</dbReference>
<dbReference type="SMART" id="SM00650">
    <property type="entry name" value="rADc"/>
    <property type="match status" value="1"/>
</dbReference>
<dbReference type="SUPFAM" id="SSF53335">
    <property type="entry name" value="S-adenosyl-L-methionine-dependent methyltransferases"/>
    <property type="match status" value="1"/>
</dbReference>
<dbReference type="PROSITE" id="PS01131">
    <property type="entry name" value="RRNA_A_DIMETH"/>
    <property type="match status" value="1"/>
</dbReference>
<dbReference type="PROSITE" id="PS51689">
    <property type="entry name" value="SAM_RNA_A_N6_MT"/>
    <property type="match status" value="1"/>
</dbReference>
<accession>A1RMU8</accession>
<keyword id="KW-0963">Cytoplasm</keyword>
<keyword id="KW-0489">Methyltransferase</keyword>
<keyword id="KW-0694">RNA-binding</keyword>
<keyword id="KW-0698">rRNA processing</keyword>
<keyword id="KW-0949">S-adenosyl-L-methionine</keyword>
<keyword id="KW-0808">Transferase</keyword>
<protein>
    <recommendedName>
        <fullName evidence="1">Ribosomal RNA small subunit methyltransferase A</fullName>
        <ecNumber evidence="1">2.1.1.182</ecNumber>
    </recommendedName>
    <alternativeName>
        <fullName evidence="1">16S rRNA (adenine(1518)-N(6)/adenine(1519)-N(6))-dimethyltransferase</fullName>
    </alternativeName>
    <alternativeName>
        <fullName evidence="1">16S rRNA dimethyladenosine transferase</fullName>
    </alternativeName>
    <alternativeName>
        <fullName evidence="1">16S rRNA dimethylase</fullName>
    </alternativeName>
    <alternativeName>
        <fullName evidence="1">S-adenosylmethionine-6-N', N'-adenosyl(rRNA) dimethyltransferase</fullName>
    </alternativeName>
</protein>
<reference key="1">
    <citation type="submission" date="2006-12" db="EMBL/GenBank/DDBJ databases">
        <title>Complete sequence of Shewanella sp. W3-18-1.</title>
        <authorList>
            <consortium name="US DOE Joint Genome Institute"/>
            <person name="Copeland A."/>
            <person name="Lucas S."/>
            <person name="Lapidus A."/>
            <person name="Barry K."/>
            <person name="Detter J.C."/>
            <person name="Glavina del Rio T."/>
            <person name="Hammon N."/>
            <person name="Israni S."/>
            <person name="Dalin E."/>
            <person name="Tice H."/>
            <person name="Pitluck S."/>
            <person name="Chain P."/>
            <person name="Malfatti S."/>
            <person name="Shin M."/>
            <person name="Vergez L."/>
            <person name="Schmutz J."/>
            <person name="Larimer F."/>
            <person name="Land M."/>
            <person name="Hauser L."/>
            <person name="Kyrpides N."/>
            <person name="Lykidis A."/>
            <person name="Tiedje J."/>
            <person name="Richardson P."/>
        </authorList>
    </citation>
    <scope>NUCLEOTIDE SEQUENCE [LARGE SCALE GENOMIC DNA]</scope>
    <source>
        <strain>W3-18-1</strain>
    </source>
</reference>
<sequence>MSNKVHLGHTARKRFGQNFLTDGNVINRIVGAIAPDNNHVMVEIGPGLGALTEPVAMAVDNLTVVELDRDLVERLHKHPVLKDKLTIHQGDALQFDFSQLVVPGKKLKVFGNLPYNISTPLMFHLFEFAEQIETMHFMLQKEVVLRLSASPGCKAYGRLTVMAQYFCQVVPVLEVPPHSFTPAPKVDSAVVRLLPYAEKPFPCKDVNVLRQLCTTAFNMRRKTLRNNLKHMLSDAEFEQLGIDQSQRPEQISVEQYVAMANMICDRKA</sequence>
<name>RSMA_SHESW</name>
<gene>
    <name evidence="1" type="primary">rsmA</name>
    <name evidence="1" type="synonym">ksgA</name>
    <name type="ordered locus">Sputw3181_3178</name>
</gene>
<proteinExistence type="inferred from homology"/>
<feature type="chain" id="PRO_1000056675" description="Ribosomal RNA small subunit methyltransferase A">
    <location>
        <begin position="1"/>
        <end position="268"/>
    </location>
</feature>
<feature type="binding site" evidence="1">
    <location>
        <position position="18"/>
    </location>
    <ligand>
        <name>S-adenosyl-L-methionine</name>
        <dbReference type="ChEBI" id="CHEBI:59789"/>
    </ligand>
</feature>
<feature type="binding site" evidence="1">
    <location>
        <position position="20"/>
    </location>
    <ligand>
        <name>S-adenosyl-L-methionine</name>
        <dbReference type="ChEBI" id="CHEBI:59789"/>
    </ligand>
</feature>
<feature type="binding site" evidence="1">
    <location>
        <position position="45"/>
    </location>
    <ligand>
        <name>S-adenosyl-L-methionine</name>
        <dbReference type="ChEBI" id="CHEBI:59789"/>
    </ligand>
</feature>
<feature type="binding site" evidence="1">
    <location>
        <position position="66"/>
    </location>
    <ligand>
        <name>S-adenosyl-L-methionine</name>
        <dbReference type="ChEBI" id="CHEBI:59789"/>
    </ligand>
</feature>
<feature type="binding site" evidence="1">
    <location>
        <position position="91"/>
    </location>
    <ligand>
        <name>S-adenosyl-L-methionine</name>
        <dbReference type="ChEBI" id="CHEBI:59789"/>
    </ligand>
</feature>
<feature type="binding site" evidence="1">
    <location>
        <position position="112"/>
    </location>
    <ligand>
        <name>S-adenosyl-L-methionine</name>
        <dbReference type="ChEBI" id="CHEBI:59789"/>
    </ligand>
</feature>
<comment type="function">
    <text evidence="1">Specifically dimethylates two adjacent adenosines (A1518 and A1519) in the loop of a conserved hairpin near the 3'-end of 16S rRNA in the 30S particle. May play a critical role in biogenesis of 30S subunits.</text>
</comment>
<comment type="catalytic activity">
    <reaction evidence="1">
        <text>adenosine(1518)/adenosine(1519) in 16S rRNA + 4 S-adenosyl-L-methionine = N(6)-dimethyladenosine(1518)/N(6)-dimethyladenosine(1519) in 16S rRNA + 4 S-adenosyl-L-homocysteine + 4 H(+)</text>
        <dbReference type="Rhea" id="RHEA:19609"/>
        <dbReference type="Rhea" id="RHEA-COMP:10232"/>
        <dbReference type="Rhea" id="RHEA-COMP:10233"/>
        <dbReference type="ChEBI" id="CHEBI:15378"/>
        <dbReference type="ChEBI" id="CHEBI:57856"/>
        <dbReference type="ChEBI" id="CHEBI:59789"/>
        <dbReference type="ChEBI" id="CHEBI:74411"/>
        <dbReference type="ChEBI" id="CHEBI:74493"/>
        <dbReference type="EC" id="2.1.1.182"/>
    </reaction>
</comment>
<comment type="subcellular location">
    <subcellularLocation>
        <location evidence="1">Cytoplasm</location>
    </subcellularLocation>
</comment>
<comment type="similarity">
    <text evidence="1">Belongs to the class I-like SAM-binding methyltransferase superfamily. rRNA adenine N(6)-methyltransferase family. RsmA subfamily.</text>
</comment>
<evidence type="ECO:0000255" key="1">
    <source>
        <dbReference type="HAMAP-Rule" id="MF_00607"/>
    </source>
</evidence>
<organism>
    <name type="scientific">Shewanella sp. (strain W3-18-1)</name>
    <dbReference type="NCBI Taxonomy" id="351745"/>
    <lineage>
        <taxon>Bacteria</taxon>
        <taxon>Pseudomonadati</taxon>
        <taxon>Pseudomonadota</taxon>
        <taxon>Gammaproteobacteria</taxon>
        <taxon>Alteromonadales</taxon>
        <taxon>Shewanellaceae</taxon>
        <taxon>Shewanella</taxon>
    </lineage>
</organism>